<evidence type="ECO:0000250" key="1"/>
<evidence type="ECO:0000255" key="2">
    <source>
        <dbReference type="PROSITE-ProRule" id="PRU00159"/>
    </source>
</evidence>
<evidence type="ECO:0000255" key="3">
    <source>
        <dbReference type="PROSITE-ProRule" id="PRU00191"/>
    </source>
</evidence>
<evidence type="ECO:0000255" key="4">
    <source>
        <dbReference type="PROSITE-ProRule" id="PRU10027"/>
    </source>
</evidence>
<evidence type="ECO:0000256" key="5">
    <source>
        <dbReference type="SAM" id="MobiDB-lite"/>
    </source>
</evidence>
<reference key="1">
    <citation type="journal article" date="2005" name="Nature">
        <title>The genome of the social amoeba Dictyostelium discoideum.</title>
        <authorList>
            <person name="Eichinger L."/>
            <person name="Pachebat J.A."/>
            <person name="Gloeckner G."/>
            <person name="Rajandream M.A."/>
            <person name="Sucgang R."/>
            <person name="Berriman M."/>
            <person name="Song J."/>
            <person name="Olsen R."/>
            <person name="Szafranski K."/>
            <person name="Xu Q."/>
            <person name="Tunggal B."/>
            <person name="Kummerfeld S."/>
            <person name="Madera M."/>
            <person name="Konfortov B.A."/>
            <person name="Rivero F."/>
            <person name="Bankier A.T."/>
            <person name="Lehmann R."/>
            <person name="Hamlin N."/>
            <person name="Davies R."/>
            <person name="Gaudet P."/>
            <person name="Fey P."/>
            <person name="Pilcher K."/>
            <person name="Chen G."/>
            <person name="Saunders D."/>
            <person name="Sodergren E.J."/>
            <person name="Davis P."/>
            <person name="Kerhornou A."/>
            <person name="Nie X."/>
            <person name="Hall N."/>
            <person name="Anjard C."/>
            <person name="Hemphill L."/>
            <person name="Bason N."/>
            <person name="Farbrother P."/>
            <person name="Desany B."/>
            <person name="Just E."/>
            <person name="Morio T."/>
            <person name="Rost R."/>
            <person name="Churcher C.M."/>
            <person name="Cooper J."/>
            <person name="Haydock S."/>
            <person name="van Driessche N."/>
            <person name="Cronin A."/>
            <person name="Goodhead I."/>
            <person name="Muzny D.M."/>
            <person name="Mourier T."/>
            <person name="Pain A."/>
            <person name="Lu M."/>
            <person name="Harper D."/>
            <person name="Lindsay R."/>
            <person name="Hauser H."/>
            <person name="James K.D."/>
            <person name="Quiles M."/>
            <person name="Madan Babu M."/>
            <person name="Saito T."/>
            <person name="Buchrieser C."/>
            <person name="Wardroper A."/>
            <person name="Felder M."/>
            <person name="Thangavelu M."/>
            <person name="Johnson D."/>
            <person name="Knights A."/>
            <person name="Loulseged H."/>
            <person name="Mungall K.L."/>
            <person name="Oliver K."/>
            <person name="Price C."/>
            <person name="Quail M.A."/>
            <person name="Urushihara H."/>
            <person name="Hernandez J."/>
            <person name="Rabbinowitsch E."/>
            <person name="Steffen D."/>
            <person name="Sanders M."/>
            <person name="Ma J."/>
            <person name="Kohara Y."/>
            <person name="Sharp S."/>
            <person name="Simmonds M.N."/>
            <person name="Spiegler S."/>
            <person name="Tivey A."/>
            <person name="Sugano S."/>
            <person name="White B."/>
            <person name="Walker D."/>
            <person name="Woodward J.R."/>
            <person name="Winckler T."/>
            <person name="Tanaka Y."/>
            <person name="Shaulsky G."/>
            <person name="Schleicher M."/>
            <person name="Weinstock G.M."/>
            <person name="Rosenthal A."/>
            <person name="Cox E.C."/>
            <person name="Chisholm R.L."/>
            <person name="Gibbs R.A."/>
            <person name="Loomis W.F."/>
            <person name="Platzer M."/>
            <person name="Kay R.R."/>
            <person name="Williams J.G."/>
            <person name="Dear P.H."/>
            <person name="Noegel A.A."/>
            <person name="Barrell B.G."/>
            <person name="Kuspa A."/>
        </authorList>
    </citation>
    <scope>NUCLEOTIDE SEQUENCE [LARGE SCALE GENOMIC DNA]</scope>
    <source>
        <strain>AX4</strain>
    </source>
</reference>
<reference key="2">
    <citation type="journal article" date="2004" name="Mol. Cell. Proteomics">
        <title>Identification of the linker-SH2 domain of STAT as the origin of the SH2 domain using two-dimensional structural alignment.</title>
        <authorList>
            <person name="Gao Q."/>
            <person name="Hua J."/>
            <person name="Kimura R."/>
            <person name="Headd J.J."/>
            <person name="Fu X.-Y."/>
            <person name="Chin Y.E."/>
        </authorList>
    </citation>
    <scope>IDENTIFICATION</scope>
</reference>
<accession>Q54G43</accession>
<gene>
    <name type="primary">shkE</name>
    <name type="ORF">DDB_G0290451</name>
</gene>
<keyword id="KW-0067">ATP-binding</keyword>
<keyword id="KW-0418">Kinase</keyword>
<keyword id="KW-0472">Membrane</keyword>
<keyword id="KW-0547">Nucleotide-binding</keyword>
<keyword id="KW-1185">Reference proteome</keyword>
<keyword id="KW-0723">Serine/threonine-protein kinase</keyword>
<keyword id="KW-0808">Transferase</keyword>
<keyword id="KW-0829">Tyrosine-protein kinase</keyword>
<name>SHKE_DICDI</name>
<proteinExistence type="inferred from homology"/>
<sequence length="710" mass="81107">MDINLIKQYINSSLPNDKESLIQYYGQLKQILNALSDKEQQQLLNNNGKISEQQQLSIENNYKVIGSIEEKMKSIEHLFNNLDVSDSNNNNSTSPVFISLDNQNTVNNNNNNNNNNNNNNNNNNNNNNNSLAPTVILDNNDNKKTAEIILPDHHNNTPQQQPEQQVQQQQVQQQQQVQQQQQQPEQQQQHLTEEQIQKQQQSQASIQQAIANMGEKKRSSSRHSGPPEIPPEEIKFDVKTDLLGGGAYGKVYKATCRGKKVAVKVPKKQTLSESELKSFKNEVEIMKQIFHPNVVLCLGACTKPGKVMIVSELMQTDLEKLIHSSEVEPPPLYERMKMCLDAALGINWLHGICNIIHRDLKLANLMISKDKTVKIGDFGFSQVIKTGTTLSDQKGPKGTALYMAPEVMMKHEFNEKADVYSFGLILYEMATCEELFPEYSEIDPFYDAICNKKLRPPIPDSFPKSLKTLIQKCWDHDPNKRPSFNEVTQRMNEVLTDTAISGLDAAMFWKYNFIKPESESVPWNEFVYKLSSVVNLPTQVLSPLAQLFVSQSYEEEIGGVVTMERFDLMNKWFGNFFNSKYGPAILYEMIELLKKRWFHFDISRDISEKRLRGRPENTFLLRLSANDPIKTPFTISKTKGSKPTHKRVSREDVQINEIKQFPMGYKFTVPLDGNELVFGSITQMVEELHRIGNLSIPCPITEIKVPYLTD</sequence>
<dbReference type="EC" id="2.7.11.1"/>
<dbReference type="EMBL" id="AAFI02000163">
    <property type="protein sequence ID" value="EAL62241.1"/>
    <property type="molecule type" value="Genomic_DNA"/>
</dbReference>
<dbReference type="RefSeq" id="XP_635729.1">
    <property type="nucleotide sequence ID" value="XM_630637.1"/>
</dbReference>
<dbReference type="SMR" id="Q54G43"/>
<dbReference type="FunCoup" id="Q54G43">
    <property type="interactions" value="1"/>
</dbReference>
<dbReference type="STRING" id="44689.Q54G43"/>
<dbReference type="PaxDb" id="44689-DDB0230104"/>
<dbReference type="EnsemblProtists" id="EAL62241">
    <property type="protein sequence ID" value="EAL62241"/>
    <property type="gene ID" value="DDB_G0290451"/>
</dbReference>
<dbReference type="GeneID" id="8627647"/>
<dbReference type="KEGG" id="ddi:DDB_G0290451"/>
<dbReference type="dictyBase" id="DDB_G0290451">
    <property type="gene designation" value="shkE"/>
</dbReference>
<dbReference type="VEuPathDB" id="AmoebaDB:DDB_G0290451"/>
<dbReference type="eggNOG" id="KOG0192">
    <property type="taxonomic scope" value="Eukaryota"/>
</dbReference>
<dbReference type="HOGENOM" id="CLU_024030_0_0_1"/>
<dbReference type="InParanoid" id="Q54G43"/>
<dbReference type="OMA" id="GICNILH"/>
<dbReference type="PhylomeDB" id="Q54G43"/>
<dbReference type="PRO" id="PR:Q54G43"/>
<dbReference type="Proteomes" id="UP000002195">
    <property type="component" value="Chromosome 5"/>
</dbReference>
<dbReference type="GO" id="GO:0005737">
    <property type="term" value="C:cytoplasm"/>
    <property type="evidence" value="ECO:0000318"/>
    <property type="project" value="GO_Central"/>
</dbReference>
<dbReference type="GO" id="GO:0016020">
    <property type="term" value="C:membrane"/>
    <property type="evidence" value="ECO:0007669"/>
    <property type="project" value="UniProtKB-SubCell"/>
</dbReference>
<dbReference type="GO" id="GO:0005524">
    <property type="term" value="F:ATP binding"/>
    <property type="evidence" value="ECO:0007669"/>
    <property type="project" value="UniProtKB-KW"/>
</dbReference>
<dbReference type="GO" id="GO:0106310">
    <property type="term" value="F:protein serine kinase activity"/>
    <property type="evidence" value="ECO:0007669"/>
    <property type="project" value="RHEA"/>
</dbReference>
<dbReference type="GO" id="GO:0004674">
    <property type="term" value="F:protein serine/threonine kinase activity"/>
    <property type="evidence" value="ECO:0000318"/>
    <property type="project" value="GO_Central"/>
</dbReference>
<dbReference type="GO" id="GO:0004713">
    <property type="term" value="F:protein tyrosine kinase activity"/>
    <property type="evidence" value="ECO:0007669"/>
    <property type="project" value="UniProtKB-KW"/>
</dbReference>
<dbReference type="GO" id="GO:0007165">
    <property type="term" value="P:signal transduction"/>
    <property type="evidence" value="ECO:0000318"/>
    <property type="project" value="GO_Central"/>
</dbReference>
<dbReference type="CDD" id="cd10357">
    <property type="entry name" value="SH2_ShkD_ShkE"/>
    <property type="match status" value="1"/>
</dbReference>
<dbReference type="CDD" id="cd13999">
    <property type="entry name" value="STKc_MAP3K-like"/>
    <property type="match status" value="1"/>
</dbReference>
<dbReference type="FunFam" id="3.30.505.10:FF:000138">
    <property type="entry name" value="Dual specificity protein kinase shkE"/>
    <property type="match status" value="1"/>
</dbReference>
<dbReference type="FunFam" id="1.10.510.10:FF:000476">
    <property type="entry name" value="PAS domain-containing protein tyrosine kinase family protein"/>
    <property type="match status" value="1"/>
</dbReference>
<dbReference type="FunFam" id="3.30.200.20:FF:000659">
    <property type="entry name" value="SH2-protein kinase domain containing protein"/>
    <property type="match status" value="1"/>
</dbReference>
<dbReference type="Gene3D" id="3.30.200.20">
    <property type="entry name" value="Phosphorylase Kinase, domain 1"/>
    <property type="match status" value="1"/>
</dbReference>
<dbReference type="Gene3D" id="3.30.505.10">
    <property type="entry name" value="SH2 domain"/>
    <property type="match status" value="1"/>
</dbReference>
<dbReference type="Gene3D" id="1.10.510.10">
    <property type="entry name" value="Transferase(Phosphotransferase) domain 1"/>
    <property type="match status" value="1"/>
</dbReference>
<dbReference type="InterPro" id="IPR011009">
    <property type="entry name" value="Kinase-like_dom_sf"/>
</dbReference>
<dbReference type="InterPro" id="IPR000719">
    <property type="entry name" value="Prot_kinase_dom"/>
</dbReference>
<dbReference type="InterPro" id="IPR017441">
    <property type="entry name" value="Protein_kinase_ATP_BS"/>
</dbReference>
<dbReference type="InterPro" id="IPR001245">
    <property type="entry name" value="Ser-Thr/Tyr_kinase_cat_dom"/>
</dbReference>
<dbReference type="InterPro" id="IPR008271">
    <property type="entry name" value="Ser/Thr_kinase_AS"/>
</dbReference>
<dbReference type="InterPro" id="IPR051681">
    <property type="entry name" value="Ser/Thr_Kinases-Pseudokinases"/>
</dbReference>
<dbReference type="InterPro" id="IPR000980">
    <property type="entry name" value="SH2"/>
</dbReference>
<dbReference type="InterPro" id="IPR036860">
    <property type="entry name" value="SH2_dom_sf"/>
</dbReference>
<dbReference type="InterPro" id="IPR035845">
    <property type="entry name" value="ShkD/ShkE_SH2"/>
</dbReference>
<dbReference type="PANTHER" id="PTHR44329:SF28">
    <property type="entry name" value="DUAL SPECIFICITY PROTEIN KINASE SHKE"/>
    <property type="match status" value="1"/>
</dbReference>
<dbReference type="PANTHER" id="PTHR44329">
    <property type="entry name" value="SERINE/THREONINE-PROTEIN KINASE TNNI3K-RELATED"/>
    <property type="match status" value="1"/>
</dbReference>
<dbReference type="Pfam" id="PF07714">
    <property type="entry name" value="PK_Tyr_Ser-Thr"/>
    <property type="match status" value="1"/>
</dbReference>
<dbReference type="Pfam" id="PF00017">
    <property type="entry name" value="SH2"/>
    <property type="match status" value="1"/>
</dbReference>
<dbReference type="SMART" id="SM00220">
    <property type="entry name" value="S_TKc"/>
    <property type="match status" value="1"/>
</dbReference>
<dbReference type="SUPFAM" id="SSF81995">
    <property type="entry name" value="beta-sandwich domain of Sec23/24"/>
    <property type="match status" value="1"/>
</dbReference>
<dbReference type="SUPFAM" id="SSF56112">
    <property type="entry name" value="Protein kinase-like (PK-like)"/>
    <property type="match status" value="1"/>
</dbReference>
<dbReference type="SUPFAM" id="SSF55550">
    <property type="entry name" value="SH2 domain"/>
    <property type="match status" value="1"/>
</dbReference>
<dbReference type="PROSITE" id="PS00107">
    <property type="entry name" value="PROTEIN_KINASE_ATP"/>
    <property type="match status" value="1"/>
</dbReference>
<dbReference type="PROSITE" id="PS50011">
    <property type="entry name" value="PROTEIN_KINASE_DOM"/>
    <property type="match status" value="1"/>
</dbReference>
<dbReference type="PROSITE" id="PS00108">
    <property type="entry name" value="PROTEIN_KINASE_ST"/>
    <property type="match status" value="1"/>
</dbReference>
<dbReference type="PROSITE" id="PS50001">
    <property type="entry name" value="SH2"/>
    <property type="match status" value="1"/>
</dbReference>
<protein>
    <recommendedName>
        <fullName>Dual specificity protein kinase shkE</fullName>
        <ecNumber>2.7.11.1</ecNumber>
    </recommendedName>
    <alternativeName>
        <fullName>SH2 domain-containing protein 5</fullName>
    </alternativeName>
    <alternativeName>
        <fullName>SH2 domain-containing protein E</fullName>
    </alternativeName>
</protein>
<organism>
    <name type="scientific">Dictyostelium discoideum</name>
    <name type="common">Social amoeba</name>
    <dbReference type="NCBI Taxonomy" id="44689"/>
    <lineage>
        <taxon>Eukaryota</taxon>
        <taxon>Amoebozoa</taxon>
        <taxon>Evosea</taxon>
        <taxon>Eumycetozoa</taxon>
        <taxon>Dictyostelia</taxon>
        <taxon>Dictyosteliales</taxon>
        <taxon>Dictyosteliaceae</taxon>
        <taxon>Dictyostelium</taxon>
    </lineage>
</organism>
<comment type="function">
    <text evidence="1">Required for proper chemotaxis and phagocytosis; proper spatiotemporal control of F-actin levels in chemotaxing cells. Negative regulator of the PI3K (phosphatidylinositol 3 kinase) pathway. Predominantly phosphorylates serines and threonines and tyrosines at a lower level (By similarity).</text>
</comment>
<comment type="catalytic activity">
    <reaction>
        <text>L-seryl-[protein] + ATP = O-phospho-L-seryl-[protein] + ADP + H(+)</text>
        <dbReference type="Rhea" id="RHEA:17989"/>
        <dbReference type="Rhea" id="RHEA-COMP:9863"/>
        <dbReference type="Rhea" id="RHEA-COMP:11604"/>
        <dbReference type="ChEBI" id="CHEBI:15378"/>
        <dbReference type="ChEBI" id="CHEBI:29999"/>
        <dbReference type="ChEBI" id="CHEBI:30616"/>
        <dbReference type="ChEBI" id="CHEBI:83421"/>
        <dbReference type="ChEBI" id="CHEBI:456216"/>
        <dbReference type="EC" id="2.7.11.1"/>
    </reaction>
</comment>
<comment type="catalytic activity">
    <reaction>
        <text>L-threonyl-[protein] + ATP = O-phospho-L-threonyl-[protein] + ADP + H(+)</text>
        <dbReference type="Rhea" id="RHEA:46608"/>
        <dbReference type="Rhea" id="RHEA-COMP:11060"/>
        <dbReference type="Rhea" id="RHEA-COMP:11605"/>
        <dbReference type="ChEBI" id="CHEBI:15378"/>
        <dbReference type="ChEBI" id="CHEBI:30013"/>
        <dbReference type="ChEBI" id="CHEBI:30616"/>
        <dbReference type="ChEBI" id="CHEBI:61977"/>
        <dbReference type="ChEBI" id="CHEBI:456216"/>
        <dbReference type="EC" id="2.7.11.1"/>
    </reaction>
</comment>
<comment type="subcellular location">
    <subcellularLocation>
        <location evidence="1">Membrane</location>
    </subcellularLocation>
</comment>
<comment type="similarity">
    <text evidence="2">Belongs to the protein kinase superfamily. Ser/Thr protein kinase family. SH2 domain-containing protein kinase subfamily.</text>
</comment>
<feature type="chain" id="PRO_0000327812" description="Dual specificity protein kinase shkE">
    <location>
        <begin position="1"/>
        <end position="710"/>
    </location>
</feature>
<feature type="domain" description="Protein kinase" evidence="2">
    <location>
        <begin position="237"/>
        <end position="495"/>
    </location>
</feature>
<feature type="domain" description="SH2" evidence="3">
    <location>
        <begin position="597"/>
        <end position="707"/>
    </location>
</feature>
<feature type="region of interest" description="Disordered" evidence="5">
    <location>
        <begin position="83"/>
        <end position="136"/>
    </location>
</feature>
<feature type="region of interest" description="Disordered" evidence="5">
    <location>
        <begin position="189"/>
        <end position="232"/>
    </location>
</feature>
<feature type="compositionally biased region" description="Low complexity" evidence="5">
    <location>
        <begin position="83"/>
        <end position="94"/>
    </location>
</feature>
<feature type="compositionally biased region" description="Low complexity" evidence="5">
    <location>
        <begin position="107"/>
        <end position="129"/>
    </location>
</feature>
<feature type="compositionally biased region" description="Low complexity" evidence="5">
    <location>
        <begin position="197"/>
        <end position="208"/>
    </location>
</feature>
<feature type="active site" description="Proton acceptor" evidence="2 4">
    <location>
        <position position="359"/>
    </location>
</feature>
<feature type="binding site" evidence="2">
    <location>
        <begin position="243"/>
        <end position="251"/>
    </location>
    <ligand>
        <name>ATP</name>
        <dbReference type="ChEBI" id="CHEBI:30616"/>
    </ligand>
</feature>
<feature type="binding site" evidence="2">
    <location>
        <position position="264"/>
    </location>
    <ligand>
        <name>ATP</name>
        <dbReference type="ChEBI" id="CHEBI:30616"/>
    </ligand>
</feature>